<evidence type="ECO:0000250" key="1">
    <source>
        <dbReference type="UniProtKB" id="P19809"/>
    </source>
</evidence>
<evidence type="ECO:0000255" key="2"/>
<evidence type="ECO:0000255" key="3">
    <source>
        <dbReference type="PROSITE-ProRule" id="PRU00445"/>
    </source>
</evidence>
<evidence type="ECO:0000255" key="4">
    <source>
        <dbReference type="PROSITE-ProRule" id="PRU01118"/>
    </source>
</evidence>
<evidence type="ECO:0000305" key="5"/>
<reference key="1">
    <citation type="journal article" date="1993" name="Infect. Immun.">
        <title>Attaching and effacing locus of a Citrobacter freundii biotype that causes transmissible murine colonic hyperplasia.</title>
        <authorList>
            <person name="Schauer D.B."/>
            <person name="Falkow S."/>
        </authorList>
    </citation>
    <scope>NUCLEOTIDE SEQUENCE [GENOMIC DNA]</scope>
</reference>
<sequence length="936" mass="102104">MIIHGFCTGTRHKHKLRKTFIMLGAGLGLFFSVNQNSFANGENYFKLRADSKLINNNIAQDRLFYTLKTGESVAQLSKSQGISVPVIWSLNKHLYSSESEMMKASPGQQIILPLKKLSAEYSTLPILGTAPVVAAADVAGHTKKMSQDTTKSNTSDDKALNYAAQQAASLGSQLQSRSLNGDYAKDTALSMAGNQASSQMQAWLQHYGTAEVNLQSGNNFDGSSLDFLLPFYDTENMLAFGQVGARYIDSRFTANLGAGQRFFLPENMLGYNVFIDQDFSGNNTRLGIGGEYWRDYFKSSVNGYFRMSGWHESYNKKDYDERPANGFDIRFNGYLPSYPALGGKLMYEQYYGDNVALFNADKLYSNPGAVTVGVNYTPIPLVTMGIDYRHGTGNENDLLYSMQFHYQFDKPWSQQIEPQYVNELRTLSGSRYDLVQRNNNIILDYKKQDILSMNIPHNINGTEHSTHKIQLIVKSKYGLERIVWDDSTLRTQGGQIQHSERKAHNDYQAILPAYVQGGSNVYKVTRRAYDRNGNSSNNVQLTITVLSNGQVVDKVGITNFTADKTSAKADNSDTITYTATVKKNGVAQANVPVSFNIVSGTATLSAKSANTNSSGKATVTLKSDKPGQVVVSAKTAEMTSALNANAVIFVDQTKASITEIKVDKTIATADNKDTIEYTVKVMKGGNPISGQKVTFSKDFGTLNKTEATTDQNGYATVKLSSGTPGKAIVSAKVSEVNTEVKAATVEFFAPLSIDGNKVTVIGTGVTGSLPKNWLQYGQVKLQATGGNGKYTWKSSNTKIASVDNSGVITLNEKGSATITVVSGDNQSATYTINTPDNIIIAVDKINRMAYSEAESRCQAISSNLAQSKSVLENIYSKWGAANKYPYYSSSNSLTAWIKQSTSDSASGVSNTYDLVTTNSLTNVKATDKNAFAVCVK</sequence>
<proteinExistence type="inferred from homology"/>
<feature type="signal peptide" evidence="2">
    <location>
        <begin position="1"/>
        <end position="41"/>
    </location>
</feature>
<feature type="chain" id="PRO_0000211825" description="Intimin" evidence="2">
    <location>
        <begin position="42"/>
        <end position="936"/>
    </location>
</feature>
<feature type="domain" description="LysM" evidence="4">
    <location>
        <begin position="63"/>
        <end position="112"/>
    </location>
</feature>
<feature type="domain" description="Big-1 1" evidence="3">
    <location>
        <begin position="557"/>
        <end position="650"/>
    </location>
</feature>
<feature type="domain" description="Big-1 2" evidence="3">
    <location>
        <begin position="657"/>
        <end position="748"/>
    </location>
</feature>
<feature type="domain" description="BIG2" evidence="2">
    <location>
        <begin position="780"/>
        <end position="831"/>
    </location>
</feature>
<feature type="disulfide bond" evidence="1">
    <location>
        <begin position="857"/>
        <end position="934"/>
    </location>
</feature>
<gene>
    <name type="primary">eae</name>
</gene>
<comment type="function">
    <text evidence="1">An inverse autotransporter.</text>
</comment>
<comment type="subcellular location">
    <subcellularLocation>
        <location evidence="1">Cell outer membrane</location>
    </subcellularLocation>
</comment>
<comment type="similarity">
    <text evidence="5">Belongs to the intimin/invasin family.</text>
</comment>
<protein>
    <recommendedName>
        <fullName>Intimin</fullName>
    </recommendedName>
    <alternativeName>
        <fullName>Attaching and effacing protein</fullName>
        <shortName>Eae protein</shortName>
    </alternativeName>
</protein>
<dbReference type="EMBL" id="L11691">
    <property type="protein sequence ID" value="AAA23097.1"/>
    <property type="molecule type" value="Genomic_DNA"/>
</dbReference>
<dbReference type="PIR" id="I40705">
    <property type="entry name" value="I40705"/>
</dbReference>
<dbReference type="SMR" id="Q07591"/>
<dbReference type="GO" id="GO:0009279">
    <property type="term" value="C:cell outer membrane"/>
    <property type="evidence" value="ECO:0007669"/>
    <property type="project" value="UniProtKB-SubCell"/>
</dbReference>
<dbReference type="GO" id="GO:0007155">
    <property type="term" value="P:cell adhesion"/>
    <property type="evidence" value="ECO:0007669"/>
    <property type="project" value="InterPro"/>
</dbReference>
<dbReference type="FunFam" id="2.60.40.10:FF:000182">
    <property type="entry name" value="Gamma intimin"/>
    <property type="match status" value="1"/>
</dbReference>
<dbReference type="FunFam" id="2.40.160.160:FF:000001">
    <property type="entry name" value="Intimin-like inverse autotransporter SinH"/>
    <property type="match status" value="1"/>
</dbReference>
<dbReference type="Gene3D" id="2.60.40.1080">
    <property type="match status" value="1"/>
</dbReference>
<dbReference type="Gene3D" id="2.60.40.10">
    <property type="entry name" value="Immunoglobulins"/>
    <property type="match status" value="2"/>
</dbReference>
<dbReference type="Gene3D" id="2.40.160.160">
    <property type="entry name" value="Inverse autotransporter, beta-domain"/>
    <property type="match status" value="1"/>
</dbReference>
<dbReference type="Gene3D" id="3.10.100.10">
    <property type="entry name" value="Mannose-Binding Protein A, subunit A"/>
    <property type="match status" value="1"/>
</dbReference>
<dbReference type="InterPro" id="IPR003344">
    <property type="entry name" value="Big_1_dom"/>
</dbReference>
<dbReference type="InterPro" id="IPR003343">
    <property type="entry name" value="Big_2"/>
</dbReference>
<dbReference type="InterPro" id="IPR016186">
    <property type="entry name" value="C-type_lectin-like/link_sf"/>
</dbReference>
<dbReference type="InterPro" id="IPR016187">
    <property type="entry name" value="CTDL_fold"/>
</dbReference>
<dbReference type="InterPro" id="IPR024519">
    <property type="entry name" value="IAT_beta"/>
</dbReference>
<dbReference type="InterPro" id="IPR038177">
    <property type="entry name" value="IAT_beta_sf"/>
</dbReference>
<dbReference type="InterPro" id="IPR013783">
    <property type="entry name" value="Ig-like_fold"/>
</dbReference>
<dbReference type="InterPro" id="IPR051715">
    <property type="entry name" value="Intimin-Invasin_domain"/>
</dbReference>
<dbReference type="InterPro" id="IPR003535">
    <property type="entry name" value="Intimin/invasin_bac"/>
</dbReference>
<dbReference type="InterPro" id="IPR013117">
    <property type="entry name" value="Intimin_C"/>
</dbReference>
<dbReference type="InterPro" id="IPR008964">
    <property type="entry name" value="Invasin/intimin_cell_adhesion"/>
</dbReference>
<dbReference type="InterPro" id="IPR018392">
    <property type="entry name" value="LysM_dom"/>
</dbReference>
<dbReference type="NCBIfam" id="NF033627">
    <property type="entry name" value="intimin_all"/>
    <property type="match status" value="1"/>
</dbReference>
<dbReference type="PANTHER" id="PTHR39576">
    <property type="entry name" value="ATTACHING AND EFFACING PROTEIN HOMOLOG-RELATED-RELATED"/>
    <property type="match status" value="1"/>
</dbReference>
<dbReference type="PANTHER" id="PTHR39576:SF1">
    <property type="entry name" value="INVASIN"/>
    <property type="match status" value="1"/>
</dbReference>
<dbReference type="Pfam" id="PF02369">
    <property type="entry name" value="Big_1"/>
    <property type="match status" value="2"/>
</dbReference>
<dbReference type="Pfam" id="PF02368">
    <property type="entry name" value="Big_2"/>
    <property type="match status" value="1"/>
</dbReference>
<dbReference type="Pfam" id="PF11924">
    <property type="entry name" value="IAT_beta"/>
    <property type="match status" value="1"/>
</dbReference>
<dbReference type="Pfam" id="PF07979">
    <property type="entry name" value="Intimin_C"/>
    <property type="match status" value="1"/>
</dbReference>
<dbReference type="Pfam" id="PF01476">
    <property type="entry name" value="LysM"/>
    <property type="match status" value="1"/>
</dbReference>
<dbReference type="PRINTS" id="PR01369">
    <property type="entry name" value="INTIMIN"/>
</dbReference>
<dbReference type="SMART" id="SM00634">
    <property type="entry name" value="BID_1"/>
    <property type="match status" value="2"/>
</dbReference>
<dbReference type="SMART" id="SM00635">
    <property type="entry name" value="BID_2"/>
    <property type="match status" value="1"/>
</dbReference>
<dbReference type="SMART" id="SM00257">
    <property type="entry name" value="LysM"/>
    <property type="match status" value="1"/>
</dbReference>
<dbReference type="SUPFAM" id="SSF56436">
    <property type="entry name" value="C-type lectin-like"/>
    <property type="match status" value="1"/>
</dbReference>
<dbReference type="SUPFAM" id="SSF49373">
    <property type="entry name" value="Invasin/intimin cell-adhesion fragments"/>
    <property type="match status" value="3"/>
</dbReference>
<dbReference type="PROSITE" id="PS51127">
    <property type="entry name" value="BIG1"/>
    <property type="match status" value="2"/>
</dbReference>
<dbReference type="PROSITE" id="PS51782">
    <property type="entry name" value="LYSM"/>
    <property type="match status" value="1"/>
</dbReference>
<accession>Q07591</accession>
<organism>
    <name type="scientific">Citrobacter freundii</name>
    <dbReference type="NCBI Taxonomy" id="546"/>
    <lineage>
        <taxon>Bacteria</taxon>
        <taxon>Pseudomonadati</taxon>
        <taxon>Pseudomonadota</taxon>
        <taxon>Gammaproteobacteria</taxon>
        <taxon>Enterobacterales</taxon>
        <taxon>Enterobacteriaceae</taxon>
        <taxon>Citrobacter</taxon>
        <taxon>Citrobacter freundii complex</taxon>
    </lineage>
</organism>
<name>EAE_CITFR</name>
<keyword id="KW-0998">Cell outer membrane</keyword>
<keyword id="KW-1015">Disulfide bond</keyword>
<keyword id="KW-0472">Membrane</keyword>
<keyword id="KW-0677">Repeat</keyword>
<keyword id="KW-0732">Signal</keyword>
<keyword id="KW-0843">Virulence</keyword>